<keyword id="KW-0965">Cell junction</keyword>
<keyword id="KW-1003">Cell membrane</keyword>
<keyword id="KW-0303">Gap junction</keyword>
<keyword id="KW-0472">Membrane</keyword>
<keyword id="KW-0597">Phosphoprotein</keyword>
<keyword id="KW-1185">Reference proteome</keyword>
<keyword id="KW-0812">Transmembrane</keyword>
<keyword id="KW-1133">Transmembrane helix</keyword>
<accession>Q0VCR2</accession>
<feature type="chain" id="PRO_0000313003" description="Gap junction alpha-5 protein">
    <location>
        <begin position="1"/>
        <end position="359"/>
    </location>
</feature>
<feature type="topological domain" description="Cytoplasmic" evidence="3">
    <location>
        <begin position="1"/>
        <end position="19"/>
    </location>
</feature>
<feature type="transmembrane region" description="Helical" evidence="3">
    <location>
        <begin position="20"/>
        <end position="40"/>
    </location>
</feature>
<feature type="topological domain" description="Extracellular" evidence="3">
    <location>
        <begin position="41"/>
        <end position="76"/>
    </location>
</feature>
<feature type="transmembrane region" description="Helical" evidence="3">
    <location>
        <begin position="77"/>
        <end position="97"/>
    </location>
</feature>
<feature type="topological domain" description="Cytoplasmic" evidence="3">
    <location>
        <begin position="98"/>
        <end position="165"/>
    </location>
</feature>
<feature type="transmembrane region" description="Helical" evidence="3">
    <location>
        <begin position="166"/>
        <end position="186"/>
    </location>
</feature>
<feature type="topological domain" description="Extracellular" evidence="3">
    <location>
        <begin position="187"/>
        <end position="206"/>
    </location>
</feature>
<feature type="transmembrane region" description="Helical" evidence="3">
    <location>
        <begin position="207"/>
        <end position="227"/>
    </location>
</feature>
<feature type="topological domain" description="Cytoplasmic" evidence="3">
    <location>
        <begin position="228"/>
        <end position="359"/>
    </location>
</feature>
<feature type="region of interest" description="Disordered" evidence="4">
    <location>
        <begin position="285"/>
        <end position="305"/>
    </location>
</feature>
<feature type="region of interest" description="Disordered" evidence="4">
    <location>
        <begin position="317"/>
        <end position="359"/>
    </location>
</feature>
<feature type="modified residue" description="Phosphoserine" evidence="2">
    <location>
        <position position="354"/>
    </location>
</feature>
<feature type="modified residue" description="Phosphoserine" evidence="2">
    <location>
        <position position="358"/>
    </location>
</feature>
<proteinExistence type="evidence at transcript level"/>
<name>CXA5_BOVIN</name>
<protein>
    <recommendedName>
        <fullName>Gap junction alpha-5 protein</fullName>
    </recommendedName>
    <alternativeName>
        <fullName>Connexin-40</fullName>
        <shortName>Cx40</shortName>
    </alternativeName>
</protein>
<gene>
    <name type="primary">GJA5</name>
</gene>
<organism>
    <name type="scientific">Bos taurus</name>
    <name type="common">Bovine</name>
    <dbReference type="NCBI Taxonomy" id="9913"/>
    <lineage>
        <taxon>Eukaryota</taxon>
        <taxon>Metazoa</taxon>
        <taxon>Chordata</taxon>
        <taxon>Craniata</taxon>
        <taxon>Vertebrata</taxon>
        <taxon>Euteleostomi</taxon>
        <taxon>Mammalia</taxon>
        <taxon>Eutheria</taxon>
        <taxon>Laurasiatheria</taxon>
        <taxon>Artiodactyla</taxon>
        <taxon>Ruminantia</taxon>
        <taxon>Pecora</taxon>
        <taxon>Bovidae</taxon>
        <taxon>Bovinae</taxon>
        <taxon>Bos</taxon>
    </lineage>
</organism>
<evidence type="ECO:0000250" key="1"/>
<evidence type="ECO:0000250" key="2">
    <source>
        <dbReference type="UniProtKB" id="P28234"/>
    </source>
</evidence>
<evidence type="ECO:0000255" key="3"/>
<evidence type="ECO:0000256" key="4">
    <source>
        <dbReference type="SAM" id="MobiDB-lite"/>
    </source>
</evidence>
<evidence type="ECO:0000305" key="5"/>
<sequence length="359" mass="40403">MGDWSFLGEFLEEVHKHSTVIGKVWLTVLFIFRMLVLGTAAESSWGDEQADFLCDTMQPGCENVCYDQAFPISHIRYWVLQVIFVSTPSLVYLGHAVHMVRVQEKRKLLREAERAKEARAAGSYEYPVAEKTELSCWEEVNGRIALQGSLLNTYVCSILIRTTMEVAFIVGQYLLYGVFLDTLHVCRRSPCPHPVNCYVSRPTEKNVFIVFMLAVAGLSLFLSLAELYHLGWKKIRQRYVKSQPGVGECQLPGPSAGRVQSCTPPPDFNQCLENGPGGKFFSPFSNKMASQQNTDNLSTEQVRSQEQIQREGFIHIRYAQKPEVPNEGSPGPSLPHGYQSDKRRLSKASSKARSDDLSV</sequence>
<comment type="function">
    <text evidence="1">One gap junction consists of a cluster of closely packed pairs of transmembrane channels, the connexons, through which materials of low MW diffuse from one cell to a neighboring cell.</text>
</comment>
<comment type="subunit">
    <text evidence="1">A connexon is composed of a hexamer of connexins.</text>
</comment>
<comment type="subcellular location">
    <subcellularLocation>
        <location evidence="1">Cell membrane</location>
        <topology evidence="1">Multi-pass membrane protein</topology>
    </subcellularLocation>
    <subcellularLocation>
        <location evidence="1">Cell junction</location>
        <location evidence="1">Gap junction</location>
    </subcellularLocation>
</comment>
<comment type="similarity">
    <text evidence="5">Belongs to the connexin family. Alpha-type (group II) subfamily.</text>
</comment>
<dbReference type="EMBL" id="BC120044">
    <property type="protein sequence ID" value="AAI20045.1"/>
    <property type="molecule type" value="mRNA"/>
</dbReference>
<dbReference type="RefSeq" id="NP_001071490.1">
    <property type="nucleotide sequence ID" value="NM_001078022.1"/>
</dbReference>
<dbReference type="SMR" id="Q0VCR2"/>
<dbReference type="FunCoup" id="Q0VCR2">
    <property type="interactions" value="173"/>
</dbReference>
<dbReference type="STRING" id="9913.ENSBTAP00000008837"/>
<dbReference type="PaxDb" id="9913-ENSBTAP00000008837"/>
<dbReference type="GeneID" id="539491"/>
<dbReference type="KEGG" id="bta:539491"/>
<dbReference type="CTD" id="2702"/>
<dbReference type="eggNOG" id="ENOG502QW11">
    <property type="taxonomic scope" value="Eukaryota"/>
</dbReference>
<dbReference type="InParanoid" id="Q0VCR2"/>
<dbReference type="OrthoDB" id="9946832at2759"/>
<dbReference type="Proteomes" id="UP000009136">
    <property type="component" value="Unplaced"/>
</dbReference>
<dbReference type="GO" id="GO:0005922">
    <property type="term" value="C:connexin complex"/>
    <property type="evidence" value="ECO:0000318"/>
    <property type="project" value="GO_Central"/>
</dbReference>
<dbReference type="GO" id="GO:0086076">
    <property type="term" value="F:gap junction channel activity involved in atrial cardiac muscle cell-AV node cell electrical coupling"/>
    <property type="evidence" value="ECO:0000318"/>
    <property type="project" value="GO_Central"/>
</dbReference>
<dbReference type="GO" id="GO:0086044">
    <property type="term" value="P:atrial cardiac muscle cell to AV node cell communication by electrical coupling"/>
    <property type="evidence" value="ECO:0000318"/>
    <property type="project" value="GO_Central"/>
</dbReference>
<dbReference type="GO" id="GO:0007267">
    <property type="term" value="P:cell-cell signaling"/>
    <property type="evidence" value="ECO:0000318"/>
    <property type="project" value="GO_Central"/>
</dbReference>
<dbReference type="GO" id="GO:0007507">
    <property type="term" value="P:heart development"/>
    <property type="evidence" value="ECO:0000318"/>
    <property type="project" value="GO_Central"/>
</dbReference>
<dbReference type="FunFam" id="1.20.1440.80:FF:000001">
    <property type="entry name" value="Gap junction alpha-1"/>
    <property type="match status" value="1"/>
</dbReference>
<dbReference type="Gene3D" id="1.20.1440.80">
    <property type="entry name" value="Gap junction channel protein cysteine-rich domain"/>
    <property type="match status" value="1"/>
</dbReference>
<dbReference type="InterPro" id="IPR000500">
    <property type="entry name" value="Connexin"/>
</dbReference>
<dbReference type="InterPro" id="IPR002264">
    <property type="entry name" value="Connexin40"/>
</dbReference>
<dbReference type="InterPro" id="IPR034634">
    <property type="entry name" value="Connexin_C"/>
</dbReference>
<dbReference type="InterPro" id="IPR019570">
    <property type="entry name" value="Connexin_CCC"/>
</dbReference>
<dbReference type="InterPro" id="IPR017990">
    <property type="entry name" value="Connexin_CS"/>
</dbReference>
<dbReference type="InterPro" id="IPR013092">
    <property type="entry name" value="Connexin_N"/>
</dbReference>
<dbReference type="InterPro" id="IPR038359">
    <property type="entry name" value="Connexin_N_sf"/>
</dbReference>
<dbReference type="InterPro" id="IPR031862">
    <property type="entry name" value="Cx40_C"/>
</dbReference>
<dbReference type="PANTHER" id="PTHR11984">
    <property type="entry name" value="CONNEXIN"/>
    <property type="match status" value="1"/>
</dbReference>
<dbReference type="PANTHER" id="PTHR11984:SF13">
    <property type="entry name" value="GAP JUNCTION ALPHA-5 PROTEIN"/>
    <property type="match status" value="1"/>
</dbReference>
<dbReference type="Pfam" id="PF00029">
    <property type="entry name" value="Connexin"/>
    <property type="match status" value="1"/>
</dbReference>
<dbReference type="Pfam" id="PF16791">
    <property type="entry name" value="Connexin40_C"/>
    <property type="match status" value="1"/>
</dbReference>
<dbReference type="PRINTS" id="PR00206">
    <property type="entry name" value="CONNEXIN"/>
</dbReference>
<dbReference type="PRINTS" id="PR01135">
    <property type="entry name" value="CONNEXINA5"/>
</dbReference>
<dbReference type="SMART" id="SM00037">
    <property type="entry name" value="CNX"/>
    <property type="match status" value="1"/>
</dbReference>
<dbReference type="SMART" id="SM01089">
    <property type="entry name" value="Connexin_CCC"/>
    <property type="match status" value="1"/>
</dbReference>
<dbReference type="SUPFAM" id="SSF118220">
    <property type="entry name" value="Connexin43"/>
    <property type="match status" value="1"/>
</dbReference>
<dbReference type="PROSITE" id="PS00407">
    <property type="entry name" value="CONNEXINS_1"/>
    <property type="match status" value="1"/>
</dbReference>
<dbReference type="PROSITE" id="PS00408">
    <property type="entry name" value="CONNEXINS_2"/>
    <property type="match status" value="1"/>
</dbReference>
<reference key="1">
    <citation type="submission" date="2006-08" db="EMBL/GenBank/DDBJ databases">
        <authorList>
            <consortium name="NIH - Mammalian Gene Collection (MGC) project"/>
        </authorList>
    </citation>
    <scope>NUCLEOTIDE SEQUENCE [LARGE SCALE MRNA]</scope>
    <source>
        <strain>Hereford</strain>
        <tissue>Fetal pons</tissue>
    </source>
</reference>